<keyword id="KW-0067">ATP-binding</keyword>
<keyword id="KW-0436">Ligase</keyword>
<keyword id="KW-0547">Nucleotide-binding</keyword>
<keyword id="KW-0648">Protein biosynthesis</keyword>
<keyword id="KW-1185">Reference proteome</keyword>
<protein>
    <recommendedName>
        <fullName evidence="1">Glutamyl-tRNA(Gln) amidotransferase subunit A</fullName>
        <shortName evidence="1">Glu-ADT subunit A</shortName>
        <ecNumber evidence="1">6.3.5.7</ecNumber>
    </recommendedName>
</protein>
<accession>Q5HN34</accession>
<sequence length="485" mass="52801">MSIRFESIEKLTELIKNKEIKPSDVVKDIYAAIEETDPTIKSFLALDKENAIKKAEELDELQAKDQMDGKLFGIPMGIKDNIITKDVETTCASKMLEGFVPIYESTVMNKLHDENAVLIGKLNMDEFAMGGSTETSYFKKTLNPFDHTAVPGGSSGGSAAAVAAGLVPFSLGSDTGGSIRQPASYCGVVGMKPTYGRVSRFGLVAFASSLDQIGPITRNVKDNALVLEAISGVDANDSTSAPVDDVDFTSDIGKDIKGLKIALPKEYLGEGVSEEVKTSVKEAVETLKSLGAEVDEVSLPNTKYGIPSYYVIASSEASVNLARFDGIRYGYHSKEAQSLEELYKMSRSEGFGEEVKRRIFLGTFALSSGYYDAYYKKSQKVRTLIKNDFDKVFESYDVVVGPTAPTTAFNIGEEIDDPLTMYANDLLTTPVNLAGLPGISVPCGQSNGRPIGLQLIGKPFDEKTLYRVAYQFETQYNLHDAYENL</sequence>
<feature type="chain" id="PRO_0000105206" description="Glutamyl-tRNA(Gln) amidotransferase subunit A">
    <location>
        <begin position="1"/>
        <end position="485"/>
    </location>
</feature>
<feature type="active site" description="Charge relay system" evidence="1">
    <location>
        <position position="79"/>
    </location>
</feature>
<feature type="active site" description="Charge relay system" evidence="1">
    <location>
        <position position="154"/>
    </location>
</feature>
<feature type="active site" description="Acyl-ester intermediate" evidence="1">
    <location>
        <position position="178"/>
    </location>
</feature>
<reference key="1">
    <citation type="journal article" date="2005" name="J. Bacteriol.">
        <title>Insights on evolution of virulence and resistance from the complete genome analysis of an early methicillin-resistant Staphylococcus aureus strain and a biofilm-producing methicillin-resistant Staphylococcus epidermidis strain.</title>
        <authorList>
            <person name="Gill S.R."/>
            <person name="Fouts D.E."/>
            <person name="Archer G.L."/>
            <person name="Mongodin E.F."/>
            <person name="DeBoy R.T."/>
            <person name="Ravel J."/>
            <person name="Paulsen I.T."/>
            <person name="Kolonay J.F."/>
            <person name="Brinkac L.M."/>
            <person name="Beanan M.J."/>
            <person name="Dodson R.J."/>
            <person name="Daugherty S.C."/>
            <person name="Madupu R."/>
            <person name="Angiuoli S.V."/>
            <person name="Durkin A.S."/>
            <person name="Haft D.H."/>
            <person name="Vamathevan J.J."/>
            <person name="Khouri H."/>
            <person name="Utterback T.R."/>
            <person name="Lee C."/>
            <person name="Dimitrov G."/>
            <person name="Jiang L."/>
            <person name="Qin H."/>
            <person name="Weidman J."/>
            <person name="Tran K."/>
            <person name="Kang K.H."/>
            <person name="Hance I.R."/>
            <person name="Nelson K.E."/>
            <person name="Fraser C.M."/>
        </authorList>
    </citation>
    <scope>NUCLEOTIDE SEQUENCE [LARGE SCALE GENOMIC DNA]</scope>
    <source>
        <strain>ATCC 35984 / DSM 28319 / BCRC 17069 / CCUG 31568 / BM 3577 / RP62A</strain>
    </source>
</reference>
<gene>
    <name evidence="1" type="primary">gatA</name>
    <name type="ordered locus">SERP1438</name>
</gene>
<proteinExistence type="inferred from homology"/>
<evidence type="ECO:0000255" key="1">
    <source>
        <dbReference type="HAMAP-Rule" id="MF_00120"/>
    </source>
</evidence>
<organism>
    <name type="scientific">Staphylococcus epidermidis (strain ATCC 35984 / DSM 28319 / BCRC 17069 / CCUG 31568 / BM 3577 / RP62A)</name>
    <dbReference type="NCBI Taxonomy" id="176279"/>
    <lineage>
        <taxon>Bacteria</taxon>
        <taxon>Bacillati</taxon>
        <taxon>Bacillota</taxon>
        <taxon>Bacilli</taxon>
        <taxon>Bacillales</taxon>
        <taxon>Staphylococcaceae</taxon>
        <taxon>Staphylococcus</taxon>
    </lineage>
</organism>
<comment type="function">
    <text evidence="1">Allows the formation of correctly charged Gln-tRNA(Gln) through the transamidation of misacylated Glu-tRNA(Gln) in organisms which lack glutaminyl-tRNA synthetase. The reaction takes place in the presence of glutamine and ATP through an activated gamma-phospho-Glu-tRNA(Gln).</text>
</comment>
<comment type="catalytic activity">
    <reaction evidence="1">
        <text>L-glutamyl-tRNA(Gln) + L-glutamine + ATP + H2O = L-glutaminyl-tRNA(Gln) + L-glutamate + ADP + phosphate + H(+)</text>
        <dbReference type="Rhea" id="RHEA:17521"/>
        <dbReference type="Rhea" id="RHEA-COMP:9681"/>
        <dbReference type="Rhea" id="RHEA-COMP:9684"/>
        <dbReference type="ChEBI" id="CHEBI:15377"/>
        <dbReference type="ChEBI" id="CHEBI:15378"/>
        <dbReference type="ChEBI" id="CHEBI:29985"/>
        <dbReference type="ChEBI" id="CHEBI:30616"/>
        <dbReference type="ChEBI" id="CHEBI:43474"/>
        <dbReference type="ChEBI" id="CHEBI:58359"/>
        <dbReference type="ChEBI" id="CHEBI:78520"/>
        <dbReference type="ChEBI" id="CHEBI:78521"/>
        <dbReference type="ChEBI" id="CHEBI:456216"/>
        <dbReference type="EC" id="6.3.5.7"/>
    </reaction>
</comment>
<comment type="subunit">
    <text evidence="1">Heterotrimer of A, B and C subunits.</text>
</comment>
<comment type="similarity">
    <text evidence="1">Belongs to the amidase family. GatA subfamily.</text>
</comment>
<name>GATA_STAEQ</name>
<dbReference type="EC" id="6.3.5.7" evidence="1"/>
<dbReference type="EMBL" id="CP000029">
    <property type="protein sequence ID" value="AAW54818.1"/>
    <property type="molecule type" value="Genomic_DNA"/>
</dbReference>
<dbReference type="RefSeq" id="WP_010959209.1">
    <property type="nucleotide sequence ID" value="NC_002976.3"/>
</dbReference>
<dbReference type="SMR" id="Q5HN34"/>
<dbReference type="STRING" id="176279.SERP1438"/>
<dbReference type="KEGG" id="ser:SERP1438"/>
<dbReference type="eggNOG" id="COG0154">
    <property type="taxonomic scope" value="Bacteria"/>
</dbReference>
<dbReference type="HOGENOM" id="CLU_009600_0_3_9"/>
<dbReference type="Proteomes" id="UP000000531">
    <property type="component" value="Chromosome"/>
</dbReference>
<dbReference type="GO" id="GO:0030956">
    <property type="term" value="C:glutamyl-tRNA(Gln) amidotransferase complex"/>
    <property type="evidence" value="ECO:0007669"/>
    <property type="project" value="InterPro"/>
</dbReference>
<dbReference type="GO" id="GO:0005524">
    <property type="term" value="F:ATP binding"/>
    <property type="evidence" value="ECO:0007669"/>
    <property type="project" value="UniProtKB-KW"/>
</dbReference>
<dbReference type="GO" id="GO:0050567">
    <property type="term" value="F:glutaminyl-tRNA synthase (glutamine-hydrolyzing) activity"/>
    <property type="evidence" value="ECO:0007669"/>
    <property type="project" value="UniProtKB-UniRule"/>
</dbReference>
<dbReference type="GO" id="GO:0006412">
    <property type="term" value="P:translation"/>
    <property type="evidence" value="ECO:0007669"/>
    <property type="project" value="UniProtKB-UniRule"/>
</dbReference>
<dbReference type="Gene3D" id="3.90.1300.10">
    <property type="entry name" value="Amidase signature (AS) domain"/>
    <property type="match status" value="1"/>
</dbReference>
<dbReference type="HAMAP" id="MF_00120">
    <property type="entry name" value="GatA"/>
    <property type="match status" value="1"/>
</dbReference>
<dbReference type="InterPro" id="IPR000120">
    <property type="entry name" value="Amidase"/>
</dbReference>
<dbReference type="InterPro" id="IPR020556">
    <property type="entry name" value="Amidase_CS"/>
</dbReference>
<dbReference type="InterPro" id="IPR023631">
    <property type="entry name" value="Amidase_dom"/>
</dbReference>
<dbReference type="InterPro" id="IPR036928">
    <property type="entry name" value="AS_sf"/>
</dbReference>
<dbReference type="InterPro" id="IPR004412">
    <property type="entry name" value="GatA"/>
</dbReference>
<dbReference type="NCBIfam" id="TIGR00132">
    <property type="entry name" value="gatA"/>
    <property type="match status" value="1"/>
</dbReference>
<dbReference type="PANTHER" id="PTHR11895:SF151">
    <property type="entry name" value="GLUTAMYL-TRNA(GLN) AMIDOTRANSFERASE SUBUNIT A"/>
    <property type="match status" value="1"/>
</dbReference>
<dbReference type="PANTHER" id="PTHR11895">
    <property type="entry name" value="TRANSAMIDASE"/>
    <property type="match status" value="1"/>
</dbReference>
<dbReference type="Pfam" id="PF01425">
    <property type="entry name" value="Amidase"/>
    <property type="match status" value="1"/>
</dbReference>
<dbReference type="SUPFAM" id="SSF75304">
    <property type="entry name" value="Amidase signature (AS) enzymes"/>
    <property type="match status" value="1"/>
</dbReference>
<dbReference type="PROSITE" id="PS00571">
    <property type="entry name" value="AMIDASES"/>
    <property type="match status" value="1"/>
</dbReference>